<evidence type="ECO:0000255" key="1">
    <source>
        <dbReference type="HAMAP-Rule" id="MF_00272"/>
    </source>
</evidence>
<evidence type="ECO:0000255" key="2">
    <source>
        <dbReference type="PROSITE-ProRule" id="PRU01066"/>
    </source>
</evidence>
<dbReference type="EMBL" id="CP000890">
    <property type="protein sequence ID" value="ABX78372.1"/>
    <property type="molecule type" value="Genomic_DNA"/>
</dbReference>
<dbReference type="RefSeq" id="WP_005770508.1">
    <property type="nucleotide sequence ID" value="NC_010117.1"/>
</dbReference>
<dbReference type="SMR" id="A9NA78"/>
<dbReference type="KEGG" id="cbs:COXBURSA331_A1903"/>
<dbReference type="HOGENOM" id="CLU_097408_2_1_6"/>
<dbReference type="GO" id="GO:0005829">
    <property type="term" value="C:cytosol"/>
    <property type="evidence" value="ECO:0007669"/>
    <property type="project" value="TreeGrafter"/>
</dbReference>
<dbReference type="GO" id="GO:0005960">
    <property type="term" value="C:glycine cleavage complex"/>
    <property type="evidence" value="ECO:0007669"/>
    <property type="project" value="InterPro"/>
</dbReference>
<dbReference type="GO" id="GO:0019464">
    <property type="term" value="P:glycine decarboxylation via glycine cleavage system"/>
    <property type="evidence" value="ECO:0007669"/>
    <property type="project" value="UniProtKB-UniRule"/>
</dbReference>
<dbReference type="CDD" id="cd06848">
    <property type="entry name" value="GCS_H"/>
    <property type="match status" value="1"/>
</dbReference>
<dbReference type="Gene3D" id="2.40.50.100">
    <property type="match status" value="1"/>
</dbReference>
<dbReference type="HAMAP" id="MF_00272">
    <property type="entry name" value="GcvH"/>
    <property type="match status" value="1"/>
</dbReference>
<dbReference type="InterPro" id="IPR003016">
    <property type="entry name" value="2-oxoA_DH_lipoyl-BS"/>
</dbReference>
<dbReference type="InterPro" id="IPR000089">
    <property type="entry name" value="Biotin_lipoyl"/>
</dbReference>
<dbReference type="InterPro" id="IPR002930">
    <property type="entry name" value="GCV_H"/>
</dbReference>
<dbReference type="InterPro" id="IPR033753">
    <property type="entry name" value="GCV_H/Fam206"/>
</dbReference>
<dbReference type="InterPro" id="IPR017453">
    <property type="entry name" value="GCV_H_sub"/>
</dbReference>
<dbReference type="InterPro" id="IPR011053">
    <property type="entry name" value="Single_hybrid_motif"/>
</dbReference>
<dbReference type="NCBIfam" id="TIGR00527">
    <property type="entry name" value="gcvH"/>
    <property type="match status" value="1"/>
</dbReference>
<dbReference type="NCBIfam" id="NF002270">
    <property type="entry name" value="PRK01202.1"/>
    <property type="match status" value="1"/>
</dbReference>
<dbReference type="PANTHER" id="PTHR11715">
    <property type="entry name" value="GLYCINE CLEAVAGE SYSTEM H PROTEIN"/>
    <property type="match status" value="1"/>
</dbReference>
<dbReference type="PANTHER" id="PTHR11715:SF3">
    <property type="entry name" value="GLYCINE CLEAVAGE SYSTEM H PROTEIN-RELATED"/>
    <property type="match status" value="1"/>
</dbReference>
<dbReference type="Pfam" id="PF01597">
    <property type="entry name" value="GCV_H"/>
    <property type="match status" value="1"/>
</dbReference>
<dbReference type="SUPFAM" id="SSF51230">
    <property type="entry name" value="Single hybrid motif"/>
    <property type="match status" value="1"/>
</dbReference>
<dbReference type="PROSITE" id="PS50968">
    <property type="entry name" value="BIOTINYL_LIPOYL"/>
    <property type="match status" value="1"/>
</dbReference>
<dbReference type="PROSITE" id="PS00189">
    <property type="entry name" value="LIPOYL"/>
    <property type="match status" value="1"/>
</dbReference>
<reference key="1">
    <citation type="submission" date="2007-11" db="EMBL/GenBank/DDBJ databases">
        <title>Genome sequencing of phylogenetically and phenotypically diverse Coxiella burnetii isolates.</title>
        <authorList>
            <person name="Seshadri R."/>
            <person name="Samuel J.E."/>
        </authorList>
    </citation>
    <scope>NUCLEOTIDE SEQUENCE [LARGE SCALE GENOMIC DNA]</scope>
    <source>
        <strain>RSA 331 / Henzerling II</strain>
    </source>
</reference>
<comment type="function">
    <text evidence="1">The glycine cleavage system catalyzes the degradation of glycine. The H protein shuttles the methylamine group of glycine from the P protein to the T protein.</text>
</comment>
<comment type="cofactor">
    <cofactor evidence="1">
        <name>(R)-lipoate</name>
        <dbReference type="ChEBI" id="CHEBI:83088"/>
    </cofactor>
    <text evidence="1">Binds 1 lipoyl cofactor covalently.</text>
</comment>
<comment type="subunit">
    <text evidence="1">The glycine cleavage system is composed of four proteins: P, T, L and H.</text>
</comment>
<comment type="similarity">
    <text evidence="1">Belongs to the GcvH family.</text>
</comment>
<keyword id="KW-0450">Lipoyl</keyword>
<accession>A9NA78</accession>
<protein>
    <recommendedName>
        <fullName evidence="1">Glycine cleavage system H protein</fullName>
    </recommendedName>
</protein>
<organism>
    <name type="scientific">Coxiella burnetii (strain RSA 331 / Henzerling II)</name>
    <dbReference type="NCBI Taxonomy" id="360115"/>
    <lineage>
        <taxon>Bacteria</taxon>
        <taxon>Pseudomonadati</taxon>
        <taxon>Pseudomonadota</taxon>
        <taxon>Gammaproteobacteria</taxon>
        <taxon>Legionellales</taxon>
        <taxon>Coxiellaceae</taxon>
        <taxon>Coxiella</taxon>
    </lineage>
</organism>
<name>GCSH_COXBR</name>
<proteinExistence type="inferred from homology"/>
<feature type="chain" id="PRO_1000078729" description="Glycine cleavage system H protein">
    <location>
        <begin position="1"/>
        <end position="130"/>
    </location>
</feature>
<feature type="domain" description="Lipoyl-binding" evidence="2">
    <location>
        <begin position="24"/>
        <end position="106"/>
    </location>
</feature>
<feature type="modified residue" description="N6-lipoyllysine" evidence="1">
    <location>
        <position position="65"/>
    </location>
</feature>
<gene>
    <name evidence="1" type="primary">gcvH</name>
    <name type="ordered locus">COXBURSA331_A1903</name>
</gene>
<sequence length="130" mass="14594">MAEFPAELYYSKNHEWMRKESDETFTVGITDHAQEQLGDLVFVELPETNIHVDAGDEVAVVESVKTAADVYSPLSGKVIEINNALENEPATVNRDPYGDGWLYRITIDDEKELNDLLDADGYQTLIEAES</sequence>